<comment type="function">
    <text evidence="1">The UvrABC repair system catalyzes the recognition and processing of DNA lesions. UvrC both incises the 5' and 3' sides of the lesion. The N-terminal half is responsible for the 3' incision and the C-terminal half is responsible for the 5' incision.</text>
</comment>
<comment type="subunit">
    <text evidence="1">Interacts with UvrB in an incision complex.</text>
</comment>
<comment type="subcellular location">
    <subcellularLocation>
        <location evidence="1">Cytoplasm</location>
    </subcellularLocation>
</comment>
<comment type="similarity">
    <text evidence="1">Belongs to the UvrC family.</text>
</comment>
<gene>
    <name evidence="1" type="primary">uvrC</name>
    <name type="ordered locus">LA_2166</name>
</gene>
<proteinExistence type="inferred from homology"/>
<organism>
    <name type="scientific">Leptospira interrogans serogroup Icterohaemorrhagiae serovar Lai (strain 56601)</name>
    <dbReference type="NCBI Taxonomy" id="189518"/>
    <lineage>
        <taxon>Bacteria</taxon>
        <taxon>Pseudomonadati</taxon>
        <taxon>Spirochaetota</taxon>
        <taxon>Spirochaetia</taxon>
        <taxon>Leptospirales</taxon>
        <taxon>Leptospiraceae</taxon>
        <taxon>Leptospira</taxon>
    </lineage>
</organism>
<keyword id="KW-0963">Cytoplasm</keyword>
<keyword id="KW-0227">DNA damage</keyword>
<keyword id="KW-0228">DNA excision</keyword>
<keyword id="KW-0234">DNA repair</keyword>
<keyword id="KW-0267">Excision nuclease</keyword>
<keyword id="KW-1185">Reference proteome</keyword>
<keyword id="KW-0742">SOS response</keyword>
<sequence length="609" mass="69762">MPEILNHTLILEKIKNLGASPGCYLWKSKKGEVLYVGKAKNLDKRVRSYLKENHPDVKTKVLQREIFDLDWIATGTEKEALILEATLIKKHNPRFNVRLKDDKKYPYICVSLSEPYPMVYVTRKLKDNGDRYFGPYSDVKSTRETLDIILRIFPVRKTRQVLPLPRPRRPCLNFDMGRCLGPCQGNIPVEDYKVIIDQVIQFLEGRKESLVSDLNIKMSNASERLDFEKAARYRDMLQRIQNFREKQTVVSLEGGDEDVIGFARKQDEGQVILLEIRGGRLETKKSFPIQGVLDAENSEILGAFFRDYYLNASLVPPCIFIPADIQDEVIPVIDVLQEKTGFRPKIKFPKGGDKRSLLKIAEKNAELGLSERLLATHYRDQTASLKEIQEMFSLERLPHIIECYDISHFQGSQPVASGVMFVEGKPFKQGYRKYNIQGYEGINDPGMIHEVISRRLQRIINEEGVFPDLIVIDGGLTQLTKACEAAVEAGAEGIPMVGLAKKREEIFFPGENEPFIFDMNSPGMKLLRHLRDEAHRFGVSHHRSRRNKETMRSLIQEVPDIGFKRSKLLLQHFSGEKKIEEATKEELLLVPGIGENLAEKILKQLQKKE</sequence>
<dbReference type="EMBL" id="AE010300">
    <property type="protein sequence ID" value="AAN49365.1"/>
    <property type="molecule type" value="Genomic_DNA"/>
</dbReference>
<dbReference type="RefSeq" id="NP_712347.1">
    <property type="nucleotide sequence ID" value="NC_004342.2"/>
</dbReference>
<dbReference type="RefSeq" id="WP_001114128.1">
    <property type="nucleotide sequence ID" value="NC_004342.2"/>
</dbReference>
<dbReference type="SMR" id="Q8F479"/>
<dbReference type="FunCoup" id="Q8F479">
    <property type="interactions" value="188"/>
</dbReference>
<dbReference type="STRING" id="189518.LA_2166"/>
<dbReference type="PaxDb" id="189518-LA_2166"/>
<dbReference type="EnsemblBacteria" id="AAN49365">
    <property type="protein sequence ID" value="AAN49365"/>
    <property type="gene ID" value="LA_2166"/>
</dbReference>
<dbReference type="KEGG" id="lil:LA_2166"/>
<dbReference type="PATRIC" id="fig|189518.3.peg.2157"/>
<dbReference type="HOGENOM" id="CLU_014841_3_2_12"/>
<dbReference type="InParanoid" id="Q8F479"/>
<dbReference type="OrthoDB" id="9804933at2"/>
<dbReference type="Proteomes" id="UP000001408">
    <property type="component" value="Chromosome I"/>
</dbReference>
<dbReference type="GO" id="GO:0005737">
    <property type="term" value="C:cytoplasm"/>
    <property type="evidence" value="ECO:0007669"/>
    <property type="project" value="UniProtKB-SubCell"/>
</dbReference>
<dbReference type="GO" id="GO:0009380">
    <property type="term" value="C:excinuclease repair complex"/>
    <property type="evidence" value="ECO:0000318"/>
    <property type="project" value="GO_Central"/>
</dbReference>
<dbReference type="GO" id="GO:0003677">
    <property type="term" value="F:DNA binding"/>
    <property type="evidence" value="ECO:0007669"/>
    <property type="project" value="UniProtKB-UniRule"/>
</dbReference>
<dbReference type="GO" id="GO:0009381">
    <property type="term" value="F:excinuclease ABC activity"/>
    <property type="evidence" value="ECO:0007669"/>
    <property type="project" value="UniProtKB-UniRule"/>
</dbReference>
<dbReference type="GO" id="GO:0006974">
    <property type="term" value="P:DNA damage response"/>
    <property type="evidence" value="ECO:0000318"/>
    <property type="project" value="GO_Central"/>
</dbReference>
<dbReference type="GO" id="GO:0006289">
    <property type="term" value="P:nucleotide-excision repair"/>
    <property type="evidence" value="ECO:0007669"/>
    <property type="project" value="UniProtKB-UniRule"/>
</dbReference>
<dbReference type="GO" id="GO:0009432">
    <property type="term" value="P:SOS response"/>
    <property type="evidence" value="ECO:0007669"/>
    <property type="project" value="UniProtKB-UniRule"/>
</dbReference>
<dbReference type="CDD" id="cd10434">
    <property type="entry name" value="GIY-YIG_UvrC_Cho"/>
    <property type="match status" value="1"/>
</dbReference>
<dbReference type="FunFam" id="3.30.420.340:FF:000006">
    <property type="entry name" value="UvrABC system protein C"/>
    <property type="match status" value="1"/>
</dbReference>
<dbReference type="FunFam" id="3.40.1440.10:FF:000001">
    <property type="entry name" value="UvrABC system protein C"/>
    <property type="match status" value="1"/>
</dbReference>
<dbReference type="Gene3D" id="1.10.150.20">
    <property type="entry name" value="5' to 3' exonuclease, C-terminal subdomain"/>
    <property type="match status" value="1"/>
</dbReference>
<dbReference type="Gene3D" id="3.40.1440.10">
    <property type="entry name" value="GIY-YIG endonuclease"/>
    <property type="match status" value="1"/>
</dbReference>
<dbReference type="Gene3D" id="4.10.860.10">
    <property type="entry name" value="UVR domain"/>
    <property type="match status" value="1"/>
</dbReference>
<dbReference type="Gene3D" id="3.30.420.340">
    <property type="entry name" value="UvrC, RNAse H endonuclease domain"/>
    <property type="match status" value="1"/>
</dbReference>
<dbReference type="HAMAP" id="MF_00203">
    <property type="entry name" value="UvrC"/>
    <property type="match status" value="1"/>
</dbReference>
<dbReference type="InterPro" id="IPR000305">
    <property type="entry name" value="GIY-YIG_endonuc"/>
</dbReference>
<dbReference type="InterPro" id="IPR035901">
    <property type="entry name" value="GIY-YIG_endonuc_sf"/>
</dbReference>
<dbReference type="InterPro" id="IPR047296">
    <property type="entry name" value="GIY-YIG_UvrC_Cho"/>
</dbReference>
<dbReference type="InterPro" id="IPR003583">
    <property type="entry name" value="Hlx-hairpin-Hlx_DNA-bd_motif"/>
</dbReference>
<dbReference type="InterPro" id="IPR010994">
    <property type="entry name" value="RuvA_2-like"/>
</dbReference>
<dbReference type="InterPro" id="IPR001943">
    <property type="entry name" value="UVR_dom"/>
</dbReference>
<dbReference type="InterPro" id="IPR036876">
    <property type="entry name" value="UVR_dom_sf"/>
</dbReference>
<dbReference type="InterPro" id="IPR050066">
    <property type="entry name" value="UvrABC_protein_C"/>
</dbReference>
<dbReference type="InterPro" id="IPR004791">
    <property type="entry name" value="UvrC"/>
</dbReference>
<dbReference type="InterPro" id="IPR001162">
    <property type="entry name" value="UvrC_RNase_H_dom"/>
</dbReference>
<dbReference type="InterPro" id="IPR038476">
    <property type="entry name" value="UvrC_RNase_H_dom_sf"/>
</dbReference>
<dbReference type="NCBIfam" id="NF001824">
    <property type="entry name" value="PRK00558.1-5"/>
    <property type="match status" value="1"/>
</dbReference>
<dbReference type="NCBIfam" id="TIGR00194">
    <property type="entry name" value="uvrC"/>
    <property type="match status" value="1"/>
</dbReference>
<dbReference type="PANTHER" id="PTHR30562:SF1">
    <property type="entry name" value="UVRABC SYSTEM PROTEIN C"/>
    <property type="match status" value="1"/>
</dbReference>
<dbReference type="PANTHER" id="PTHR30562">
    <property type="entry name" value="UVRC/OXIDOREDUCTASE"/>
    <property type="match status" value="1"/>
</dbReference>
<dbReference type="Pfam" id="PF01541">
    <property type="entry name" value="GIY-YIG"/>
    <property type="match status" value="1"/>
</dbReference>
<dbReference type="Pfam" id="PF14520">
    <property type="entry name" value="HHH_5"/>
    <property type="match status" value="1"/>
</dbReference>
<dbReference type="Pfam" id="PF02151">
    <property type="entry name" value="UVR"/>
    <property type="match status" value="1"/>
</dbReference>
<dbReference type="Pfam" id="PF22920">
    <property type="entry name" value="UvrC_RNaseH"/>
    <property type="match status" value="1"/>
</dbReference>
<dbReference type="Pfam" id="PF08459">
    <property type="entry name" value="UvrC_RNaseH_dom"/>
    <property type="match status" value="1"/>
</dbReference>
<dbReference type="SMART" id="SM00465">
    <property type="entry name" value="GIYc"/>
    <property type="match status" value="1"/>
</dbReference>
<dbReference type="SMART" id="SM00278">
    <property type="entry name" value="HhH1"/>
    <property type="match status" value="2"/>
</dbReference>
<dbReference type="SUPFAM" id="SSF46600">
    <property type="entry name" value="C-terminal UvrC-binding domain of UvrB"/>
    <property type="match status" value="1"/>
</dbReference>
<dbReference type="SUPFAM" id="SSF82771">
    <property type="entry name" value="GIY-YIG endonuclease"/>
    <property type="match status" value="1"/>
</dbReference>
<dbReference type="SUPFAM" id="SSF47781">
    <property type="entry name" value="RuvA domain 2-like"/>
    <property type="match status" value="1"/>
</dbReference>
<dbReference type="PROSITE" id="PS50164">
    <property type="entry name" value="GIY_YIG"/>
    <property type="match status" value="1"/>
</dbReference>
<dbReference type="PROSITE" id="PS50151">
    <property type="entry name" value="UVR"/>
    <property type="match status" value="1"/>
</dbReference>
<dbReference type="PROSITE" id="PS50165">
    <property type="entry name" value="UVRC"/>
    <property type="match status" value="1"/>
</dbReference>
<feature type="chain" id="PRO_0000138311" description="UvrABC system protein C">
    <location>
        <begin position="1"/>
        <end position="609"/>
    </location>
</feature>
<feature type="domain" description="GIY-YIG" evidence="1">
    <location>
        <begin position="19"/>
        <end position="97"/>
    </location>
</feature>
<feature type="domain" description="UVR" evidence="1">
    <location>
        <begin position="208"/>
        <end position="243"/>
    </location>
</feature>
<evidence type="ECO:0000255" key="1">
    <source>
        <dbReference type="HAMAP-Rule" id="MF_00203"/>
    </source>
</evidence>
<accession>Q8F479</accession>
<reference key="1">
    <citation type="journal article" date="2003" name="Nature">
        <title>Unique physiological and pathogenic features of Leptospira interrogans revealed by whole-genome sequencing.</title>
        <authorList>
            <person name="Ren S.-X."/>
            <person name="Fu G."/>
            <person name="Jiang X.-G."/>
            <person name="Zeng R."/>
            <person name="Miao Y.-G."/>
            <person name="Xu H."/>
            <person name="Zhang Y.-X."/>
            <person name="Xiong H."/>
            <person name="Lu G."/>
            <person name="Lu L.-F."/>
            <person name="Jiang H.-Q."/>
            <person name="Jia J."/>
            <person name="Tu Y.-F."/>
            <person name="Jiang J.-X."/>
            <person name="Gu W.-Y."/>
            <person name="Zhang Y.-Q."/>
            <person name="Cai Z."/>
            <person name="Sheng H.-H."/>
            <person name="Yin H.-F."/>
            <person name="Zhang Y."/>
            <person name="Zhu G.-F."/>
            <person name="Wan M."/>
            <person name="Huang H.-L."/>
            <person name="Qian Z."/>
            <person name="Wang S.-Y."/>
            <person name="Ma W."/>
            <person name="Yao Z.-J."/>
            <person name="Shen Y."/>
            <person name="Qiang B.-Q."/>
            <person name="Xia Q.-C."/>
            <person name="Guo X.-K."/>
            <person name="Danchin A."/>
            <person name="Saint Girons I."/>
            <person name="Somerville R.L."/>
            <person name="Wen Y.-M."/>
            <person name="Shi M.-H."/>
            <person name="Chen Z."/>
            <person name="Xu J.-G."/>
            <person name="Zhao G.-P."/>
        </authorList>
    </citation>
    <scope>NUCLEOTIDE SEQUENCE [LARGE SCALE GENOMIC DNA]</scope>
    <source>
        <strain>56601</strain>
    </source>
</reference>
<name>UVRC_LEPIN</name>
<protein>
    <recommendedName>
        <fullName evidence="1">UvrABC system protein C</fullName>
        <shortName evidence="1">Protein UvrC</shortName>
    </recommendedName>
    <alternativeName>
        <fullName evidence="1">Excinuclease ABC subunit C</fullName>
    </alternativeName>
</protein>